<name>UVRB_HELPH</name>
<feature type="chain" id="PRO_1000077894" description="UvrABC system protein B">
    <location>
        <begin position="1"/>
        <end position="658"/>
    </location>
</feature>
<feature type="domain" description="Helicase ATP-binding" evidence="1">
    <location>
        <begin position="25"/>
        <end position="178"/>
    </location>
</feature>
<feature type="domain" description="Helicase C-terminal" evidence="1">
    <location>
        <begin position="433"/>
        <end position="607"/>
    </location>
</feature>
<feature type="domain" description="UVR" evidence="1">
    <location>
        <begin position="623"/>
        <end position="658"/>
    </location>
</feature>
<feature type="short sequence motif" description="Beta-hairpin">
    <location>
        <begin position="91"/>
        <end position="114"/>
    </location>
</feature>
<feature type="binding site" evidence="1">
    <location>
        <begin position="38"/>
        <end position="45"/>
    </location>
    <ligand>
        <name>ATP</name>
        <dbReference type="ChEBI" id="CHEBI:30616"/>
    </ligand>
</feature>
<organism>
    <name type="scientific">Helicobacter pylori (strain HPAG1)</name>
    <dbReference type="NCBI Taxonomy" id="357544"/>
    <lineage>
        <taxon>Bacteria</taxon>
        <taxon>Pseudomonadati</taxon>
        <taxon>Campylobacterota</taxon>
        <taxon>Epsilonproteobacteria</taxon>
        <taxon>Campylobacterales</taxon>
        <taxon>Helicobacteraceae</taxon>
        <taxon>Helicobacter</taxon>
    </lineage>
</organism>
<protein>
    <recommendedName>
        <fullName evidence="1">UvrABC system protein B</fullName>
        <shortName evidence="1">Protein UvrB</shortName>
    </recommendedName>
    <alternativeName>
        <fullName evidence="1">Excinuclease ABC subunit B</fullName>
    </alternativeName>
</protein>
<evidence type="ECO:0000255" key="1">
    <source>
        <dbReference type="HAMAP-Rule" id="MF_00204"/>
    </source>
</evidence>
<keyword id="KW-0067">ATP-binding</keyword>
<keyword id="KW-0963">Cytoplasm</keyword>
<keyword id="KW-0227">DNA damage</keyword>
<keyword id="KW-0228">DNA excision</keyword>
<keyword id="KW-0234">DNA repair</keyword>
<keyword id="KW-0267">Excision nuclease</keyword>
<keyword id="KW-0347">Helicase</keyword>
<keyword id="KW-0378">Hydrolase</keyword>
<keyword id="KW-0547">Nucleotide-binding</keyword>
<keyword id="KW-0742">SOS response</keyword>
<proteinExistence type="inferred from homology"/>
<reference key="1">
    <citation type="journal article" date="2006" name="Proc. Natl. Acad. Sci. U.S.A.">
        <title>The complete genome sequence of a chronic atrophic gastritis Helicobacter pylori strain: evolution during disease progression.</title>
        <authorList>
            <person name="Oh J.D."/>
            <person name="Kling-Baeckhed H."/>
            <person name="Giannakis M."/>
            <person name="Xu J."/>
            <person name="Fulton R.S."/>
            <person name="Fulton L.A."/>
            <person name="Cordum H.S."/>
            <person name="Wang C."/>
            <person name="Elliott G."/>
            <person name="Edwards J."/>
            <person name="Mardis E.R."/>
            <person name="Engstrand L.G."/>
            <person name="Gordon J.I."/>
        </authorList>
    </citation>
    <scope>NUCLEOTIDE SEQUENCE [LARGE SCALE GENOMIC DNA]</scope>
    <source>
        <strain>HPAG1</strain>
    </source>
</reference>
<gene>
    <name evidence="1" type="primary">uvrB</name>
    <name type="ordered locus">HPAG1_1053</name>
</gene>
<sequence length="658" mass="75970">MPLFDLKSPYPPAGDQPQAIEALAKSLKNNNHYQTLVGVTGSGKTYTMANIIAQTNKPALIMSHNKTLCAQLYSEFKAFFPHNRVEYFISHFDYYQPESYIPRRDLFIEKDSSINDDLERLRLSATTSLLGYDDVIVIASVSANYGLGNPEEYLKVMEKIKVGEKRAYKNFLLKLVEMGYSRNEVVFDRGSFRATGECVDIFPAYNDAEFIRIEFFGDEIERIAVFDALEKNEIKRLDSVMLYAASQFAVGSERLNLAIKSIEDELALRLKFFKEQDKMLEYNRLKQRTEHDLEMISATGVCKGIENYARHFTGKAPNETPFCLFDYLGIFEREFLVIVDESHVSLPQFGGMYAGDMSRKSVLVEYGFRLPSALDNRPLKFDEFIHKNCQFLFVSATPNKLELELSKKNVAEQIIRPTGLLDPKFEVRDSDKQVQDLFDEIKLVVARDERVLITTLTKKMAEELCKYYAEWGLKVRYMHSEIDAIERNHIIRSLRLKEFDILIGINLLREGLDLPEVSLVAIMDADKEGFLRSETSLIQTMGRAARNANGKVLLYAKKITQSMQKAFEITSYRRAKQEEFNKIHNITPKTVTRALEEELKLRDDEIRIAKALKKDKMPKSEREKIIKELDKKMRECAKNLDFEEAMRLRDEIAKLRTL</sequence>
<comment type="function">
    <text evidence="1">The UvrABC repair system catalyzes the recognition and processing of DNA lesions. A damage recognition complex composed of 2 UvrA and 2 UvrB subunits scans DNA for abnormalities. Upon binding of the UvrA(2)B(2) complex to a putative damaged site, the DNA wraps around one UvrB monomer. DNA wrap is dependent on ATP binding by UvrB and probably causes local melting of the DNA helix, facilitating insertion of UvrB beta-hairpin between the DNA strands. Then UvrB probes one DNA strand for the presence of a lesion. If a lesion is found the UvrA subunits dissociate and the UvrB-DNA preincision complex is formed. This complex is subsequently bound by UvrC and the second UvrB is released. If no lesion is found, the DNA wraps around the other UvrB subunit that will check the other stand for damage.</text>
</comment>
<comment type="subunit">
    <text evidence="1">Forms a heterotetramer with UvrA during the search for lesions. Interacts with UvrC in an incision complex.</text>
</comment>
<comment type="subcellular location">
    <subcellularLocation>
        <location evidence="1">Cytoplasm</location>
    </subcellularLocation>
</comment>
<comment type="domain">
    <text evidence="1">The beta-hairpin motif is involved in DNA binding.</text>
</comment>
<comment type="similarity">
    <text evidence="1">Belongs to the UvrB family.</text>
</comment>
<accession>Q1CSF2</accession>
<dbReference type="EMBL" id="CP000241">
    <property type="protein sequence ID" value="ABF85120.1"/>
    <property type="molecule type" value="Genomic_DNA"/>
</dbReference>
<dbReference type="RefSeq" id="WP_011550090.1">
    <property type="nucleotide sequence ID" value="NC_008086.1"/>
</dbReference>
<dbReference type="SMR" id="Q1CSF2"/>
<dbReference type="KEGG" id="hpa:HPAG1_1053"/>
<dbReference type="HOGENOM" id="CLU_009621_2_1_7"/>
<dbReference type="GO" id="GO:0005737">
    <property type="term" value="C:cytoplasm"/>
    <property type="evidence" value="ECO:0007669"/>
    <property type="project" value="UniProtKB-SubCell"/>
</dbReference>
<dbReference type="GO" id="GO:0009380">
    <property type="term" value="C:excinuclease repair complex"/>
    <property type="evidence" value="ECO:0007669"/>
    <property type="project" value="InterPro"/>
</dbReference>
<dbReference type="GO" id="GO:0005524">
    <property type="term" value="F:ATP binding"/>
    <property type="evidence" value="ECO:0007669"/>
    <property type="project" value="UniProtKB-UniRule"/>
</dbReference>
<dbReference type="GO" id="GO:0016887">
    <property type="term" value="F:ATP hydrolysis activity"/>
    <property type="evidence" value="ECO:0007669"/>
    <property type="project" value="InterPro"/>
</dbReference>
<dbReference type="GO" id="GO:0003677">
    <property type="term" value="F:DNA binding"/>
    <property type="evidence" value="ECO:0007669"/>
    <property type="project" value="UniProtKB-UniRule"/>
</dbReference>
<dbReference type="GO" id="GO:0009381">
    <property type="term" value="F:excinuclease ABC activity"/>
    <property type="evidence" value="ECO:0007669"/>
    <property type="project" value="UniProtKB-UniRule"/>
</dbReference>
<dbReference type="GO" id="GO:0004386">
    <property type="term" value="F:helicase activity"/>
    <property type="evidence" value="ECO:0007669"/>
    <property type="project" value="UniProtKB-KW"/>
</dbReference>
<dbReference type="GO" id="GO:0006289">
    <property type="term" value="P:nucleotide-excision repair"/>
    <property type="evidence" value="ECO:0007669"/>
    <property type="project" value="UniProtKB-UniRule"/>
</dbReference>
<dbReference type="GO" id="GO:0009432">
    <property type="term" value="P:SOS response"/>
    <property type="evidence" value="ECO:0007669"/>
    <property type="project" value="UniProtKB-UniRule"/>
</dbReference>
<dbReference type="CDD" id="cd17916">
    <property type="entry name" value="DEXHc_UvrB"/>
    <property type="match status" value="1"/>
</dbReference>
<dbReference type="CDD" id="cd18790">
    <property type="entry name" value="SF2_C_UvrB"/>
    <property type="match status" value="1"/>
</dbReference>
<dbReference type="Gene3D" id="3.40.50.300">
    <property type="entry name" value="P-loop containing nucleotide triphosphate hydrolases"/>
    <property type="match status" value="3"/>
</dbReference>
<dbReference type="Gene3D" id="4.10.860.10">
    <property type="entry name" value="UVR domain"/>
    <property type="match status" value="1"/>
</dbReference>
<dbReference type="HAMAP" id="MF_00204">
    <property type="entry name" value="UvrB"/>
    <property type="match status" value="1"/>
</dbReference>
<dbReference type="InterPro" id="IPR006935">
    <property type="entry name" value="Helicase/UvrB_N"/>
</dbReference>
<dbReference type="InterPro" id="IPR014001">
    <property type="entry name" value="Helicase_ATP-bd"/>
</dbReference>
<dbReference type="InterPro" id="IPR001650">
    <property type="entry name" value="Helicase_C-like"/>
</dbReference>
<dbReference type="InterPro" id="IPR027417">
    <property type="entry name" value="P-loop_NTPase"/>
</dbReference>
<dbReference type="InterPro" id="IPR001943">
    <property type="entry name" value="UVR_dom"/>
</dbReference>
<dbReference type="InterPro" id="IPR036876">
    <property type="entry name" value="UVR_dom_sf"/>
</dbReference>
<dbReference type="InterPro" id="IPR004807">
    <property type="entry name" value="UvrB"/>
</dbReference>
<dbReference type="InterPro" id="IPR041471">
    <property type="entry name" value="UvrB_inter"/>
</dbReference>
<dbReference type="InterPro" id="IPR024759">
    <property type="entry name" value="UvrB_YAD/RRR_dom"/>
</dbReference>
<dbReference type="NCBIfam" id="NF003673">
    <property type="entry name" value="PRK05298.1"/>
    <property type="match status" value="1"/>
</dbReference>
<dbReference type="NCBIfam" id="TIGR00631">
    <property type="entry name" value="uvrb"/>
    <property type="match status" value="1"/>
</dbReference>
<dbReference type="PANTHER" id="PTHR24029">
    <property type="entry name" value="UVRABC SYSTEM PROTEIN B"/>
    <property type="match status" value="1"/>
</dbReference>
<dbReference type="PANTHER" id="PTHR24029:SF0">
    <property type="entry name" value="UVRABC SYSTEM PROTEIN B"/>
    <property type="match status" value="1"/>
</dbReference>
<dbReference type="Pfam" id="PF00271">
    <property type="entry name" value="Helicase_C"/>
    <property type="match status" value="1"/>
</dbReference>
<dbReference type="Pfam" id="PF04851">
    <property type="entry name" value="ResIII"/>
    <property type="match status" value="1"/>
</dbReference>
<dbReference type="Pfam" id="PF02151">
    <property type="entry name" value="UVR"/>
    <property type="match status" value="1"/>
</dbReference>
<dbReference type="Pfam" id="PF12344">
    <property type="entry name" value="UvrB"/>
    <property type="match status" value="1"/>
</dbReference>
<dbReference type="Pfam" id="PF17757">
    <property type="entry name" value="UvrB_inter"/>
    <property type="match status" value="1"/>
</dbReference>
<dbReference type="SMART" id="SM00487">
    <property type="entry name" value="DEXDc"/>
    <property type="match status" value="1"/>
</dbReference>
<dbReference type="SMART" id="SM00490">
    <property type="entry name" value="HELICc"/>
    <property type="match status" value="1"/>
</dbReference>
<dbReference type="SUPFAM" id="SSF46600">
    <property type="entry name" value="C-terminal UvrC-binding domain of UvrB"/>
    <property type="match status" value="1"/>
</dbReference>
<dbReference type="SUPFAM" id="SSF52540">
    <property type="entry name" value="P-loop containing nucleoside triphosphate hydrolases"/>
    <property type="match status" value="2"/>
</dbReference>
<dbReference type="PROSITE" id="PS51192">
    <property type="entry name" value="HELICASE_ATP_BIND_1"/>
    <property type="match status" value="2"/>
</dbReference>
<dbReference type="PROSITE" id="PS51194">
    <property type="entry name" value="HELICASE_CTER"/>
    <property type="match status" value="1"/>
</dbReference>
<dbReference type="PROSITE" id="PS50151">
    <property type="entry name" value="UVR"/>
    <property type="match status" value="1"/>
</dbReference>